<dbReference type="EMBL" id="U00096">
    <property type="protein sequence ID" value="AAC73930.1"/>
    <property type="molecule type" value="Genomic_DNA"/>
</dbReference>
<dbReference type="EMBL" id="AP009048">
    <property type="protein sequence ID" value="BAA35547.1"/>
    <property type="molecule type" value="Genomic_DNA"/>
</dbReference>
<dbReference type="PIR" id="C64822">
    <property type="entry name" value="C64822"/>
</dbReference>
<dbReference type="RefSeq" id="NP_415364.1">
    <property type="nucleotide sequence ID" value="NC_000913.3"/>
</dbReference>
<dbReference type="RefSeq" id="WP_000605480.1">
    <property type="nucleotide sequence ID" value="NZ_SSZK01000002.1"/>
</dbReference>
<dbReference type="BioGRID" id="4262829">
    <property type="interactions" value="8"/>
</dbReference>
<dbReference type="FunCoup" id="P0AAY4">
    <property type="interactions" value="15"/>
</dbReference>
<dbReference type="STRING" id="511145.b0843"/>
<dbReference type="PaxDb" id="511145-b0843"/>
<dbReference type="EnsemblBacteria" id="AAC73930">
    <property type="protein sequence ID" value="AAC73930"/>
    <property type="gene ID" value="b0843"/>
</dbReference>
<dbReference type="GeneID" id="945447"/>
<dbReference type="KEGG" id="ecj:JW0827"/>
<dbReference type="KEGG" id="eco:b0843"/>
<dbReference type="PATRIC" id="fig|511145.12.peg.871"/>
<dbReference type="EchoBASE" id="EB3441"/>
<dbReference type="eggNOG" id="ENOG5032VJW">
    <property type="taxonomic scope" value="Bacteria"/>
</dbReference>
<dbReference type="HOGENOM" id="CLU_2436353_0_0_6"/>
<dbReference type="InParanoid" id="P0AAY4"/>
<dbReference type="OMA" id="YHPRARH"/>
<dbReference type="OrthoDB" id="6573039at2"/>
<dbReference type="BioCyc" id="EcoCyc:G6441-MONOMER"/>
<dbReference type="PRO" id="PR:P0AAY4"/>
<dbReference type="Proteomes" id="UP000000625">
    <property type="component" value="Chromosome"/>
</dbReference>
<evidence type="ECO:0000255" key="1"/>
<proteinExistence type="inferred from homology"/>
<feature type="signal peptide" evidence="1">
    <location>
        <begin position="1"/>
        <end position="22"/>
    </location>
</feature>
<feature type="chain" id="PRO_0000013814" description="Uncharacterized protein YbjH">
    <location>
        <begin position="23"/>
        <end position="94"/>
    </location>
</feature>
<gene>
    <name type="primary">ybjH</name>
    <name type="ordered locus">b0843</name>
    <name type="ordered locus">JW0827</name>
</gene>
<protein>
    <recommendedName>
        <fullName>Uncharacterized protein YbjH</fullName>
    </recommendedName>
</protein>
<name>YBJH_ECOLI</name>
<accession>P0AAY4</accession>
<accession>P75808</accession>
<organism>
    <name type="scientific">Escherichia coli (strain K12)</name>
    <dbReference type="NCBI Taxonomy" id="83333"/>
    <lineage>
        <taxon>Bacteria</taxon>
        <taxon>Pseudomonadati</taxon>
        <taxon>Pseudomonadota</taxon>
        <taxon>Gammaproteobacteria</taxon>
        <taxon>Enterobacterales</taxon>
        <taxon>Enterobacteriaceae</taxon>
        <taxon>Escherichia</taxon>
    </lineage>
</organism>
<keyword id="KW-1185">Reference proteome</keyword>
<keyword id="KW-0732">Signal</keyword>
<reference key="1">
    <citation type="journal article" date="1996" name="DNA Res.">
        <title>A 718-kb DNA sequence of the Escherichia coli K-12 genome corresponding to the 12.7-28.0 min region on the linkage map.</title>
        <authorList>
            <person name="Oshima T."/>
            <person name="Aiba H."/>
            <person name="Baba T."/>
            <person name="Fujita K."/>
            <person name="Hayashi K."/>
            <person name="Honjo A."/>
            <person name="Ikemoto K."/>
            <person name="Inada T."/>
            <person name="Itoh T."/>
            <person name="Kajihara M."/>
            <person name="Kanai K."/>
            <person name="Kashimoto K."/>
            <person name="Kimura S."/>
            <person name="Kitagawa M."/>
            <person name="Makino K."/>
            <person name="Masuda S."/>
            <person name="Miki T."/>
            <person name="Mizobuchi K."/>
            <person name="Mori H."/>
            <person name="Motomura K."/>
            <person name="Nakamura Y."/>
            <person name="Nashimoto H."/>
            <person name="Nishio Y."/>
            <person name="Saito N."/>
            <person name="Sampei G."/>
            <person name="Seki Y."/>
            <person name="Tagami H."/>
            <person name="Takemoto K."/>
            <person name="Wada C."/>
            <person name="Yamamoto Y."/>
            <person name="Yano M."/>
            <person name="Horiuchi T."/>
        </authorList>
    </citation>
    <scope>NUCLEOTIDE SEQUENCE [LARGE SCALE GENOMIC DNA]</scope>
    <source>
        <strain>K12 / W3110 / ATCC 27325 / DSM 5911</strain>
    </source>
</reference>
<reference key="2">
    <citation type="journal article" date="1997" name="Science">
        <title>The complete genome sequence of Escherichia coli K-12.</title>
        <authorList>
            <person name="Blattner F.R."/>
            <person name="Plunkett G. III"/>
            <person name="Bloch C.A."/>
            <person name="Perna N.T."/>
            <person name="Burland V."/>
            <person name="Riley M."/>
            <person name="Collado-Vides J."/>
            <person name="Glasner J.D."/>
            <person name="Rode C.K."/>
            <person name="Mayhew G.F."/>
            <person name="Gregor J."/>
            <person name="Davis N.W."/>
            <person name="Kirkpatrick H.A."/>
            <person name="Goeden M.A."/>
            <person name="Rose D.J."/>
            <person name="Mau B."/>
            <person name="Shao Y."/>
        </authorList>
    </citation>
    <scope>NUCLEOTIDE SEQUENCE [LARGE SCALE GENOMIC DNA]</scope>
    <source>
        <strain>K12 / MG1655 / ATCC 47076</strain>
    </source>
</reference>
<reference key="3">
    <citation type="journal article" date="2006" name="Mol. Syst. Biol.">
        <title>Highly accurate genome sequences of Escherichia coli K-12 strains MG1655 and W3110.</title>
        <authorList>
            <person name="Hayashi K."/>
            <person name="Morooka N."/>
            <person name="Yamamoto Y."/>
            <person name="Fujita K."/>
            <person name="Isono K."/>
            <person name="Choi S."/>
            <person name="Ohtsubo E."/>
            <person name="Baba T."/>
            <person name="Wanner B.L."/>
            <person name="Mori H."/>
            <person name="Horiuchi T."/>
        </authorList>
    </citation>
    <scope>NUCLEOTIDE SEQUENCE [LARGE SCALE GENOMIC DNA]</scope>
    <source>
        <strain>K12 / W3110 / ATCC 27325 / DSM 5911</strain>
    </source>
</reference>
<sequence>MIMKNCLLLGALLMGFTGVAMAQSVTVDVPSGYKVVVVPDSVSVPQAVSVATVPQTVYVAPAPAPAYRPHPYVRHLASVGEGMVIEHQIDDHHH</sequence>